<keyword id="KW-0520">NAD</keyword>
<keyword id="KW-0560">Oxidoreductase</keyword>
<evidence type="ECO:0000250" key="1"/>
<evidence type="ECO:0000305" key="2"/>
<feature type="chain" id="PRO_0000371519" description="Mannitol-1-phosphate 5-dehydrogenase">
    <location>
        <begin position="1"/>
        <end position="388"/>
    </location>
</feature>
<feature type="active site" evidence="1">
    <location>
        <position position="213"/>
    </location>
</feature>
<feature type="binding site" evidence="1">
    <location>
        <begin position="5"/>
        <end position="16"/>
    </location>
    <ligand>
        <name>NAD(+)</name>
        <dbReference type="ChEBI" id="CHEBI:57540"/>
    </ligand>
</feature>
<gene>
    <name type="primary">mpdA</name>
    <name type="ORF">AFUB_026440</name>
</gene>
<name>MTLD_ASPFC</name>
<sequence>MGKKAIQFGGGNIGRGFVAEFLHEAGYEVVFIDVVDKIIDALKSTPSYEVTEVSEEGEKTKTITNYRAINSKTNEEDVVKEIGTADVVTCAVGPNVLKFIAPVIAKGIDARTASKPVAVIACENAIGATDTLRGFIEQNTDKDRLSSMSERARFANSAIDRIVPNQPPNAGLNVRIEKFYEWTVEQTPFGEFGHPDIPAIHWVDDLKPYIERKLFTVNTGHATTAYYGHMRGKKMIADALADAEIRQIVHKVLEQTAKLITTKHEITEQEQNEYVDTIVKRMSNPFLEDNVERVGRAPLRKLSRNERFIGPASQLAEKGLPFDALLGSIEMALRFQNVPGDEESAELAKILKEMSAEEATGKLTGLEKHHPLYEPVQNVIAKVQKDSK</sequence>
<organism>
    <name type="scientific">Aspergillus fumigatus (strain CBS 144.89 / FGSC A1163 / CEA10)</name>
    <name type="common">Neosartorya fumigata</name>
    <dbReference type="NCBI Taxonomy" id="451804"/>
    <lineage>
        <taxon>Eukaryota</taxon>
        <taxon>Fungi</taxon>
        <taxon>Dikarya</taxon>
        <taxon>Ascomycota</taxon>
        <taxon>Pezizomycotina</taxon>
        <taxon>Eurotiomycetes</taxon>
        <taxon>Eurotiomycetidae</taxon>
        <taxon>Eurotiales</taxon>
        <taxon>Aspergillaceae</taxon>
        <taxon>Aspergillus</taxon>
        <taxon>Aspergillus subgen. Fumigati</taxon>
    </lineage>
</organism>
<proteinExistence type="inferred from homology"/>
<comment type="function">
    <text evidence="1">Catalyzes the NAD(H)-dependent interconversion of D-fructose 6-phosphate and D-mannitol 1-phosphate in the mannitol metabolic pathway.</text>
</comment>
<comment type="catalytic activity">
    <reaction>
        <text>D-mannitol 1-phosphate + NAD(+) = beta-D-fructose 6-phosphate + NADH + H(+)</text>
        <dbReference type="Rhea" id="RHEA:19661"/>
        <dbReference type="ChEBI" id="CHEBI:15378"/>
        <dbReference type="ChEBI" id="CHEBI:57540"/>
        <dbReference type="ChEBI" id="CHEBI:57634"/>
        <dbReference type="ChEBI" id="CHEBI:57945"/>
        <dbReference type="ChEBI" id="CHEBI:61381"/>
        <dbReference type="EC" id="1.1.1.17"/>
    </reaction>
</comment>
<comment type="subunit">
    <text evidence="1">Monomer.</text>
</comment>
<comment type="similarity">
    <text evidence="2">Belongs to the mannitol dehydrogenase family.</text>
</comment>
<accession>B0XS99</accession>
<reference key="1">
    <citation type="journal article" date="2008" name="PLoS Genet.">
        <title>Genomic islands in the pathogenic filamentous fungus Aspergillus fumigatus.</title>
        <authorList>
            <person name="Fedorova N.D."/>
            <person name="Khaldi N."/>
            <person name="Joardar V.S."/>
            <person name="Maiti R."/>
            <person name="Amedeo P."/>
            <person name="Anderson M.J."/>
            <person name="Crabtree J."/>
            <person name="Silva J.C."/>
            <person name="Badger J.H."/>
            <person name="Albarraq A."/>
            <person name="Angiuoli S."/>
            <person name="Bussey H."/>
            <person name="Bowyer P."/>
            <person name="Cotty P.J."/>
            <person name="Dyer P.S."/>
            <person name="Egan A."/>
            <person name="Galens K."/>
            <person name="Fraser-Liggett C.M."/>
            <person name="Haas B.J."/>
            <person name="Inman J.M."/>
            <person name="Kent R."/>
            <person name="Lemieux S."/>
            <person name="Malavazi I."/>
            <person name="Orvis J."/>
            <person name="Roemer T."/>
            <person name="Ronning C.M."/>
            <person name="Sundaram J.P."/>
            <person name="Sutton G."/>
            <person name="Turner G."/>
            <person name="Venter J.C."/>
            <person name="White O.R."/>
            <person name="Whitty B.R."/>
            <person name="Youngman P."/>
            <person name="Wolfe K.H."/>
            <person name="Goldman G.H."/>
            <person name="Wortman J.R."/>
            <person name="Jiang B."/>
            <person name="Denning D.W."/>
            <person name="Nierman W.C."/>
        </authorList>
    </citation>
    <scope>NUCLEOTIDE SEQUENCE [LARGE SCALE GENOMIC DNA]</scope>
    <source>
        <strain>CBS 144.89 / FGSC A1163 / CEA10</strain>
    </source>
</reference>
<protein>
    <recommendedName>
        <fullName>Mannitol-1-phosphate 5-dehydrogenase</fullName>
        <shortName>M1PDH</shortName>
        <shortName>MPD</shortName>
        <shortName>MPDH</shortName>
        <ecNumber>1.1.1.17</ecNumber>
    </recommendedName>
</protein>
<dbReference type="EC" id="1.1.1.17"/>
<dbReference type="EMBL" id="DS499595">
    <property type="protein sequence ID" value="EDP54585.1"/>
    <property type="molecule type" value="Genomic_DNA"/>
</dbReference>
<dbReference type="SMR" id="B0XS99"/>
<dbReference type="EnsemblFungi" id="EDP54585">
    <property type="protein sequence ID" value="EDP54585"/>
    <property type="gene ID" value="AFUB_026440"/>
</dbReference>
<dbReference type="VEuPathDB" id="FungiDB:AFUB_026440"/>
<dbReference type="HOGENOM" id="CLU_036089_0_1_1"/>
<dbReference type="OrthoDB" id="55759at5052"/>
<dbReference type="PhylomeDB" id="B0XS99"/>
<dbReference type="Proteomes" id="UP000001699">
    <property type="component" value="Unassembled WGS sequence"/>
</dbReference>
<dbReference type="GO" id="GO:0005829">
    <property type="term" value="C:cytosol"/>
    <property type="evidence" value="ECO:0007669"/>
    <property type="project" value="TreeGrafter"/>
</dbReference>
<dbReference type="GO" id="GO:0008926">
    <property type="term" value="F:mannitol-1-phosphate 5-dehydrogenase activity"/>
    <property type="evidence" value="ECO:0007669"/>
    <property type="project" value="UniProtKB-EC"/>
</dbReference>
<dbReference type="GO" id="GO:0019592">
    <property type="term" value="P:mannitol catabolic process"/>
    <property type="evidence" value="ECO:0007669"/>
    <property type="project" value="TreeGrafter"/>
</dbReference>
<dbReference type="FunFam" id="1.10.1040.10:FF:000009">
    <property type="entry name" value="Mannitol-1-phosphate 5-dehydrogenase"/>
    <property type="match status" value="1"/>
</dbReference>
<dbReference type="FunFam" id="3.40.50.720:FF:000316">
    <property type="entry name" value="Mannitol-1-phosphate 5-dehydrogenase"/>
    <property type="match status" value="1"/>
</dbReference>
<dbReference type="Gene3D" id="1.10.1040.10">
    <property type="entry name" value="N-(1-d-carboxylethyl)-l-norvaline Dehydrogenase, domain 2"/>
    <property type="match status" value="1"/>
</dbReference>
<dbReference type="Gene3D" id="3.40.50.720">
    <property type="entry name" value="NAD(P)-binding Rossmann-like Domain"/>
    <property type="match status" value="1"/>
</dbReference>
<dbReference type="HAMAP" id="MF_00196">
    <property type="entry name" value="Mannitol_dehydrog"/>
    <property type="match status" value="1"/>
</dbReference>
<dbReference type="InterPro" id="IPR008927">
    <property type="entry name" value="6-PGluconate_DH-like_C_sf"/>
</dbReference>
<dbReference type="InterPro" id="IPR013328">
    <property type="entry name" value="6PGD_dom2"/>
</dbReference>
<dbReference type="InterPro" id="IPR023028">
    <property type="entry name" value="Mannitol_1_phos_5_DH"/>
</dbReference>
<dbReference type="InterPro" id="IPR000669">
    <property type="entry name" value="Mannitol_DH"/>
</dbReference>
<dbReference type="InterPro" id="IPR013118">
    <property type="entry name" value="Mannitol_DH_C"/>
</dbReference>
<dbReference type="InterPro" id="IPR013131">
    <property type="entry name" value="Mannitol_DH_N"/>
</dbReference>
<dbReference type="InterPro" id="IPR036291">
    <property type="entry name" value="NAD(P)-bd_dom_sf"/>
</dbReference>
<dbReference type="NCBIfam" id="NF002652">
    <property type="entry name" value="PRK02318.2-5"/>
    <property type="match status" value="1"/>
</dbReference>
<dbReference type="PANTHER" id="PTHR30524:SF0">
    <property type="entry name" value="ALTRONATE OXIDOREDUCTASE-RELATED"/>
    <property type="match status" value="1"/>
</dbReference>
<dbReference type="PANTHER" id="PTHR30524">
    <property type="entry name" value="MANNITOL-1-PHOSPHATE 5-DEHYDROGENASE"/>
    <property type="match status" value="1"/>
</dbReference>
<dbReference type="Pfam" id="PF01232">
    <property type="entry name" value="Mannitol_dh"/>
    <property type="match status" value="1"/>
</dbReference>
<dbReference type="Pfam" id="PF08125">
    <property type="entry name" value="Mannitol_dh_C"/>
    <property type="match status" value="1"/>
</dbReference>
<dbReference type="PRINTS" id="PR00084">
    <property type="entry name" value="MTLDHDRGNASE"/>
</dbReference>
<dbReference type="SUPFAM" id="SSF48179">
    <property type="entry name" value="6-phosphogluconate dehydrogenase C-terminal domain-like"/>
    <property type="match status" value="1"/>
</dbReference>
<dbReference type="SUPFAM" id="SSF51735">
    <property type="entry name" value="NAD(P)-binding Rossmann-fold domains"/>
    <property type="match status" value="1"/>
</dbReference>